<comment type="function">
    <text evidence="1">Involved in mitochondrial genome encoded proteins translation.</text>
</comment>
<comment type="function">
    <text evidence="2">Component of the mitochondrial ribosome (mitoribosome), a dedicated translation machinery responsible for the synthesis of mitochondrial genome-encoded proteins, including at least some of the essential transmembrane subunits of the mitochondrial respiratory chain. The mitoribosomes are attached to the mitochondrial inner membrane and translation products are cotranslationally integrated into the membrane.</text>
</comment>
<comment type="subunit">
    <text evidence="2">Component of the mitochondrial large ribosomal subunit (mt-LSU). Mature yeast 74S mitochondrial ribosomes consist of a small (37S) and a large (54S) subunit. The 37S small subunit contains a 15S ribosomal RNA (15S mt-rRNA) and at least 32 different proteins. The 54S large subunit contains a 21S rRNA (21S mt-rRNA) and at least 45 different proteins.</text>
</comment>
<comment type="subcellular location">
    <subcellularLocation>
        <location evidence="2">Mitochondrion</location>
    </subcellularLocation>
</comment>
<comment type="similarity">
    <text evidence="5">Belongs to the mitochondrion-specific ribosomal protein mL40 family.</text>
</comment>
<organism>
    <name type="scientific">Schizosaccharomyces pombe (strain 972 / ATCC 24843)</name>
    <name type="common">Fission yeast</name>
    <dbReference type="NCBI Taxonomy" id="284812"/>
    <lineage>
        <taxon>Eukaryota</taxon>
        <taxon>Fungi</taxon>
        <taxon>Dikarya</taxon>
        <taxon>Ascomycota</taxon>
        <taxon>Taphrinomycotina</taxon>
        <taxon>Schizosaccharomycetes</taxon>
        <taxon>Schizosaccharomycetales</taxon>
        <taxon>Schizosaccharomycetaceae</taxon>
        <taxon>Schizosaccharomyces</taxon>
    </lineage>
</organism>
<sequence>MAKASKGKHQSGPSNHSESIDLVRKALYGNKKVRSLKMNPDMWEKHEVINRAWRIHEYRQEKQRENLLKNQFSAMKIACEELKHTSETLYKAAMSDSINRRFPVETRTPTDTPPRLSK</sequence>
<gene>
    <name type="primary">mrpl28</name>
    <name type="ORF">SPAC4F8.05c</name>
</gene>
<keyword id="KW-0496">Mitochondrion</keyword>
<keyword id="KW-1185">Reference proteome</keyword>
<keyword id="KW-0687">Ribonucleoprotein</keyword>
<keyword id="KW-0689">Ribosomal protein</keyword>
<keyword id="KW-0809">Transit peptide</keyword>
<name>RM28_SCHPO</name>
<proteinExistence type="inferred from homology"/>
<feature type="transit peptide" description="Mitochondrion" evidence="3">
    <location>
        <begin position="1"/>
        <end position="35"/>
    </location>
</feature>
<feature type="chain" id="PRO_0000087691" description="Large ribosomal subunit protein mL40">
    <location>
        <begin position="36"/>
        <end position="118"/>
    </location>
</feature>
<feature type="region of interest" description="Disordered" evidence="4">
    <location>
        <begin position="1"/>
        <end position="21"/>
    </location>
</feature>
<accession>O14181</accession>
<reference key="1">
    <citation type="journal article" date="2002" name="Nature">
        <title>The genome sequence of Schizosaccharomyces pombe.</title>
        <authorList>
            <person name="Wood V."/>
            <person name="Gwilliam R."/>
            <person name="Rajandream M.A."/>
            <person name="Lyne M.H."/>
            <person name="Lyne R."/>
            <person name="Stewart A."/>
            <person name="Sgouros J.G."/>
            <person name="Peat N."/>
            <person name="Hayles J."/>
            <person name="Baker S.G."/>
            <person name="Basham D."/>
            <person name="Bowman S."/>
            <person name="Brooks K."/>
            <person name="Brown D."/>
            <person name="Brown S."/>
            <person name="Chillingworth T."/>
            <person name="Churcher C.M."/>
            <person name="Collins M."/>
            <person name="Connor R."/>
            <person name="Cronin A."/>
            <person name="Davis P."/>
            <person name="Feltwell T."/>
            <person name="Fraser A."/>
            <person name="Gentles S."/>
            <person name="Goble A."/>
            <person name="Hamlin N."/>
            <person name="Harris D.E."/>
            <person name="Hidalgo J."/>
            <person name="Hodgson G."/>
            <person name="Holroyd S."/>
            <person name="Hornsby T."/>
            <person name="Howarth S."/>
            <person name="Huckle E.J."/>
            <person name="Hunt S."/>
            <person name="Jagels K."/>
            <person name="James K.D."/>
            <person name="Jones L."/>
            <person name="Jones M."/>
            <person name="Leather S."/>
            <person name="McDonald S."/>
            <person name="McLean J."/>
            <person name="Mooney P."/>
            <person name="Moule S."/>
            <person name="Mungall K.L."/>
            <person name="Murphy L.D."/>
            <person name="Niblett D."/>
            <person name="Odell C."/>
            <person name="Oliver K."/>
            <person name="O'Neil S."/>
            <person name="Pearson D."/>
            <person name="Quail M.A."/>
            <person name="Rabbinowitsch E."/>
            <person name="Rutherford K.M."/>
            <person name="Rutter S."/>
            <person name="Saunders D."/>
            <person name="Seeger K."/>
            <person name="Sharp S."/>
            <person name="Skelton J."/>
            <person name="Simmonds M.N."/>
            <person name="Squares R."/>
            <person name="Squares S."/>
            <person name="Stevens K."/>
            <person name="Taylor K."/>
            <person name="Taylor R.G."/>
            <person name="Tivey A."/>
            <person name="Walsh S.V."/>
            <person name="Warren T."/>
            <person name="Whitehead S."/>
            <person name="Woodward J.R."/>
            <person name="Volckaert G."/>
            <person name="Aert R."/>
            <person name="Robben J."/>
            <person name="Grymonprez B."/>
            <person name="Weltjens I."/>
            <person name="Vanstreels E."/>
            <person name="Rieger M."/>
            <person name="Schaefer M."/>
            <person name="Mueller-Auer S."/>
            <person name="Gabel C."/>
            <person name="Fuchs M."/>
            <person name="Duesterhoeft A."/>
            <person name="Fritzc C."/>
            <person name="Holzer E."/>
            <person name="Moestl D."/>
            <person name="Hilbert H."/>
            <person name="Borzym K."/>
            <person name="Langer I."/>
            <person name="Beck A."/>
            <person name="Lehrach H."/>
            <person name="Reinhardt R."/>
            <person name="Pohl T.M."/>
            <person name="Eger P."/>
            <person name="Zimmermann W."/>
            <person name="Wedler H."/>
            <person name="Wambutt R."/>
            <person name="Purnelle B."/>
            <person name="Goffeau A."/>
            <person name="Cadieu E."/>
            <person name="Dreano S."/>
            <person name="Gloux S."/>
            <person name="Lelaure V."/>
            <person name="Mottier S."/>
            <person name="Galibert F."/>
            <person name="Aves S.J."/>
            <person name="Xiang Z."/>
            <person name="Hunt C."/>
            <person name="Moore K."/>
            <person name="Hurst S.M."/>
            <person name="Lucas M."/>
            <person name="Rochet M."/>
            <person name="Gaillardin C."/>
            <person name="Tallada V.A."/>
            <person name="Garzon A."/>
            <person name="Thode G."/>
            <person name="Daga R.R."/>
            <person name="Cruzado L."/>
            <person name="Jimenez J."/>
            <person name="Sanchez M."/>
            <person name="del Rey F."/>
            <person name="Benito J."/>
            <person name="Dominguez A."/>
            <person name="Revuelta J.L."/>
            <person name="Moreno S."/>
            <person name="Armstrong J."/>
            <person name="Forsburg S.L."/>
            <person name="Cerutti L."/>
            <person name="Lowe T."/>
            <person name="McCombie W.R."/>
            <person name="Paulsen I."/>
            <person name="Potashkin J."/>
            <person name="Shpakovski G.V."/>
            <person name="Ussery D."/>
            <person name="Barrell B.G."/>
            <person name="Nurse P."/>
        </authorList>
    </citation>
    <scope>NUCLEOTIDE SEQUENCE [LARGE SCALE GENOMIC DNA]</scope>
    <source>
        <strain>972 / ATCC 24843</strain>
    </source>
</reference>
<evidence type="ECO:0000250" key="1"/>
<evidence type="ECO:0000250" key="2">
    <source>
        <dbReference type="UniProtKB" id="P36527"/>
    </source>
</evidence>
<evidence type="ECO:0000255" key="3"/>
<evidence type="ECO:0000256" key="4">
    <source>
        <dbReference type="SAM" id="MobiDB-lite"/>
    </source>
</evidence>
<evidence type="ECO:0000305" key="5"/>
<dbReference type="EMBL" id="CU329670">
    <property type="protein sequence ID" value="CAB11052.1"/>
    <property type="molecule type" value="Genomic_DNA"/>
</dbReference>
<dbReference type="PIR" id="T38835">
    <property type="entry name" value="T38835"/>
</dbReference>
<dbReference type="RefSeq" id="NP_593867.1">
    <property type="nucleotide sequence ID" value="NM_001019296.2"/>
</dbReference>
<dbReference type="SMR" id="O14181"/>
<dbReference type="BioGRID" id="280003">
    <property type="interactions" value="2"/>
</dbReference>
<dbReference type="ComplexPortal" id="CPX-10323">
    <property type="entry name" value="54S mitochondrial large ribosomal subunit"/>
</dbReference>
<dbReference type="FunCoup" id="O14181">
    <property type="interactions" value="10"/>
</dbReference>
<dbReference type="STRING" id="284812.O14181"/>
<dbReference type="PaxDb" id="4896-SPAC4F8.05c.1"/>
<dbReference type="EnsemblFungi" id="SPAC4F8.05c.1">
    <property type="protein sequence ID" value="SPAC4F8.05c.1:pep"/>
    <property type="gene ID" value="SPAC4F8.05c"/>
</dbReference>
<dbReference type="GeneID" id="2543588"/>
<dbReference type="KEGG" id="spo:2543588"/>
<dbReference type="PomBase" id="SPAC4F8.05c">
    <property type="gene designation" value="mrpl28"/>
</dbReference>
<dbReference type="VEuPathDB" id="FungiDB:SPAC4F8.05c"/>
<dbReference type="eggNOG" id="KOG4778">
    <property type="taxonomic scope" value="Eukaryota"/>
</dbReference>
<dbReference type="HOGENOM" id="CLU_1993925_0_0_1"/>
<dbReference type="InParanoid" id="O14181"/>
<dbReference type="OMA" id="DYAYKAP"/>
<dbReference type="PhylomeDB" id="O14181"/>
<dbReference type="PRO" id="PR:O14181"/>
<dbReference type="Proteomes" id="UP000002485">
    <property type="component" value="Chromosome I"/>
</dbReference>
<dbReference type="GO" id="GO:0005762">
    <property type="term" value="C:mitochondrial large ribosomal subunit"/>
    <property type="evidence" value="ECO:0000250"/>
    <property type="project" value="PomBase"/>
</dbReference>
<dbReference type="GO" id="GO:0003735">
    <property type="term" value="F:structural constituent of ribosome"/>
    <property type="evidence" value="ECO:0000250"/>
    <property type="project" value="PomBase"/>
</dbReference>
<dbReference type="GO" id="GO:0032543">
    <property type="term" value="P:mitochondrial translation"/>
    <property type="evidence" value="ECO:0000250"/>
    <property type="project" value="PomBase"/>
</dbReference>
<dbReference type="Gene3D" id="6.10.250.3440">
    <property type="match status" value="1"/>
</dbReference>
<dbReference type="InterPro" id="IPR019192">
    <property type="entry name" value="Ribosomal_mL40"/>
</dbReference>
<dbReference type="InterPro" id="IPR042831">
    <property type="entry name" value="Ribosomal_mL40_fung"/>
</dbReference>
<dbReference type="PANTHER" id="PTHR39150">
    <property type="entry name" value="54S RIBOSOMAL PROTEIN L28, MITOCHONDRIAL"/>
    <property type="match status" value="1"/>
</dbReference>
<dbReference type="PANTHER" id="PTHR39150:SF1">
    <property type="entry name" value="LARGE RIBOSOMAL SUBUNIT PROTEIN ML40"/>
    <property type="match status" value="1"/>
</dbReference>
<dbReference type="Pfam" id="PF09812">
    <property type="entry name" value="MRP-L28"/>
    <property type="match status" value="1"/>
</dbReference>
<protein>
    <recommendedName>
        <fullName evidence="5">Large ribosomal subunit protein mL40</fullName>
    </recommendedName>
    <alternativeName>
        <fullName>54S ribosomal protein L28, mitochondrial</fullName>
    </alternativeName>
</protein>